<dbReference type="EC" id="2.5.1.10" evidence="6"/>
<dbReference type="EC" id="2.5.1.1" evidence="6"/>
<dbReference type="EMBL" id="CU329670">
    <property type="protein sequence ID" value="CAB11097.1"/>
    <property type="molecule type" value="Genomic_DNA"/>
</dbReference>
<dbReference type="EMBL" id="D89104">
    <property type="protein sequence ID" value="BAA13767.1"/>
    <property type="molecule type" value="mRNA"/>
</dbReference>
<dbReference type="PIR" id="T11664">
    <property type="entry name" value="T11664"/>
</dbReference>
<dbReference type="PIR" id="T42081">
    <property type="entry name" value="T42081"/>
</dbReference>
<dbReference type="RefSeq" id="NP_593299.1">
    <property type="nucleotide sequence ID" value="NM_001018729.2"/>
</dbReference>
<dbReference type="SMR" id="O14230"/>
<dbReference type="BioGRID" id="279342">
    <property type="interactions" value="5"/>
</dbReference>
<dbReference type="FunCoup" id="O14230">
    <property type="interactions" value="643"/>
</dbReference>
<dbReference type="STRING" id="284812.O14230"/>
<dbReference type="iPTMnet" id="O14230"/>
<dbReference type="PaxDb" id="4896-SPAC6F12.13c.1"/>
<dbReference type="EnsemblFungi" id="SPAC6F12.13c.1">
    <property type="protein sequence ID" value="SPAC6F12.13c.1:pep"/>
    <property type="gene ID" value="SPAC6F12.13c"/>
</dbReference>
<dbReference type="GeneID" id="2542898"/>
<dbReference type="KEGG" id="spo:2542898"/>
<dbReference type="PomBase" id="SPAC6F12.13c">
    <property type="gene designation" value="fps1"/>
</dbReference>
<dbReference type="VEuPathDB" id="FungiDB:SPAC6F12.13c"/>
<dbReference type="eggNOG" id="KOG0711">
    <property type="taxonomic scope" value="Eukaryota"/>
</dbReference>
<dbReference type="HOGENOM" id="CLU_028376_1_0_1"/>
<dbReference type="InParanoid" id="O14230"/>
<dbReference type="OMA" id="CSWVVNQ"/>
<dbReference type="PhylomeDB" id="O14230"/>
<dbReference type="Reactome" id="R-SPO-191273">
    <property type="pathway name" value="Cholesterol biosynthesis"/>
</dbReference>
<dbReference type="UniPathway" id="UPA00259">
    <property type="reaction ID" value="UER00368"/>
</dbReference>
<dbReference type="UniPathway" id="UPA00260">
    <property type="reaction ID" value="UER00369"/>
</dbReference>
<dbReference type="PRO" id="PR:O14230"/>
<dbReference type="Proteomes" id="UP000002485">
    <property type="component" value="Chromosome I"/>
</dbReference>
<dbReference type="GO" id="GO:0005737">
    <property type="term" value="C:cytoplasm"/>
    <property type="evidence" value="ECO:0000318"/>
    <property type="project" value="GO_Central"/>
</dbReference>
<dbReference type="GO" id="GO:0005829">
    <property type="term" value="C:cytosol"/>
    <property type="evidence" value="ECO:0007005"/>
    <property type="project" value="PomBase"/>
</dbReference>
<dbReference type="GO" id="GO:0005783">
    <property type="term" value="C:endoplasmic reticulum"/>
    <property type="evidence" value="ECO:0000266"/>
    <property type="project" value="PomBase"/>
</dbReference>
<dbReference type="GO" id="GO:0005634">
    <property type="term" value="C:nucleus"/>
    <property type="evidence" value="ECO:0007005"/>
    <property type="project" value="PomBase"/>
</dbReference>
<dbReference type="GO" id="GO:0004337">
    <property type="term" value="F:(2E,6E)-farnesyl diphosphate synthase activity"/>
    <property type="evidence" value="ECO:0000314"/>
    <property type="project" value="PomBase"/>
</dbReference>
<dbReference type="GO" id="GO:0004161">
    <property type="term" value="F:dimethylallyltranstransferase activity"/>
    <property type="evidence" value="ECO:0000318"/>
    <property type="project" value="GO_Central"/>
</dbReference>
<dbReference type="GO" id="GO:0046872">
    <property type="term" value="F:metal ion binding"/>
    <property type="evidence" value="ECO:0007669"/>
    <property type="project" value="UniProtKB-KW"/>
</dbReference>
<dbReference type="GO" id="GO:0045337">
    <property type="term" value="P:farnesyl diphosphate biosynthetic process"/>
    <property type="evidence" value="ECO:0000318"/>
    <property type="project" value="GO_Central"/>
</dbReference>
<dbReference type="GO" id="GO:0010142">
    <property type="term" value="P:farnesyl diphosphate biosynthetic process, mevalonate pathway"/>
    <property type="evidence" value="ECO:0000269"/>
    <property type="project" value="PomBase"/>
</dbReference>
<dbReference type="GO" id="GO:0033384">
    <property type="term" value="P:geranyl diphosphate biosynthetic process"/>
    <property type="evidence" value="ECO:0007669"/>
    <property type="project" value="UniProtKB-UniPathway"/>
</dbReference>
<dbReference type="GO" id="GO:0033386">
    <property type="term" value="P:geranylgeranyl diphosphate biosynthetic process"/>
    <property type="evidence" value="ECO:0000305"/>
    <property type="project" value="PomBase"/>
</dbReference>
<dbReference type="CDD" id="cd00685">
    <property type="entry name" value="Trans_IPPS_HT"/>
    <property type="match status" value="1"/>
</dbReference>
<dbReference type="FunFam" id="1.10.600.10:FF:000006">
    <property type="entry name" value="Farnesyl pyrophosphate synthase"/>
    <property type="match status" value="1"/>
</dbReference>
<dbReference type="Gene3D" id="1.10.600.10">
    <property type="entry name" value="Farnesyl Diphosphate Synthase"/>
    <property type="match status" value="1"/>
</dbReference>
<dbReference type="InterPro" id="IPR039702">
    <property type="entry name" value="FPS1-like"/>
</dbReference>
<dbReference type="InterPro" id="IPR008949">
    <property type="entry name" value="Isoprenoid_synthase_dom_sf"/>
</dbReference>
<dbReference type="InterPro" id="IPR000092">
    <property type="entry name" value="Polyprenyl_synt"/>
</dbReference>
<dbReference type="InterPro" id="IPR033749">
    <property type="entry name" value="Polyprenyl_synt_CS"/>
</dbReference>
<dbReference type="PANTHER" id="PTHR11525:SF0">
    <property type="entry name" value="FARNESYL PYROPHOSPHATE SYNTHASE"/>
    <property type="match status" value="1"/>
</dbReference>
<dbReference type="PANTHER" id="PTHR11525">
    <property type="entry name" value="FARNESYL-PYROPHOSPHATE SYNTHETASE"/>
    <property type="match status" value="1"/>
</dbReference>
<dbReference type="Pfam" id="PF00348">
    <property type="entry name" value="polyprenyl_synt"/>
    <property type="match status" value="1"/>
</dbReference>
<dbReference type="SFLD" id="SFLDS00005">
    <property type="entry name" value="Isoprenoid_Synthase_Type_I"/>
    <property type="match status" value="1"/>
</dbReference>
<dbReference type="SFLD" id="SFLDG01017">
    <property type="entry name" value="Polyprenyl_Transferase_Like"/>
    <property type="match status" value="1"/>
</dbReference>
<dbReference type="SUPFAM" id="SSF48576">
    <property type="entry name" value="Terpenoid synthases"/>
    <property type="match status" value="1"/>
</dbReference>
<dbReference type="PROSITE" id="PS00723">
    <property type="entry name" value="POLYPRENYL_SYNTHASE_1"/>
    <property type="match status" value="1"/>
</dbReference>
<dbReference type="PROSITE" id="PS00444">
    <property type="entry name" value="POLYPRENYL_SYNTHASE_2"/>
    <property type="match status" value="1"/>
</dbReference>
<feature type="chain" id="PRO_0000123951" description="Farnesyl pyrophosphate synthase">
    <location>
        <begin position="1"/>
        <end position="347"/>
    </location>
</feature>
<feature type="binding site" evidence="1">
    <location>
        <position position="50"/>
    </location>
    <ligand>
        <name>isopentenyl diphosphate</name>
        <dbReference type="ChEBI" id="CHEBI:128769"/>
    </ligand>
</feature>
<feature type="binding site" evidence="1">
    <location>
        <position position="53"/>
    </location>
    <ligand>
        <name>isopentenyl diphosphate</name>
        <dbReference type="ChEBI" id="CHEBI:128769"/>
    </ligand>
</feature>
<feature type="binding site" evidence="1">
    <location>
        <position position="88"/>
    </location>
    <ligand>
        <name>isopentenyl diphosphate</name>
        <dbReference type="ChEBI" id="CHEBI:128769"/>
    </ligand>
</feature>
<feature type="binding site" evidence="1">
    <location>
        <position position="95"/>
    </location>
    <ligand>
        <name>Mg(2+)</name>
        <dbReference type="ChEBI" id="CHEBI:18420"/>
        <label>1</label>
    </ligand>
</feature>
<feature type="binding site" evidence="1">
    <location>
        <position position="95"/>
    </location>
    <ligand>
        <name>Mg(2+)</name>
        <dbReference type="ChEBI" id="CHEBI:18420"/>
        <label>2</label>
    </ligand>
</feature>
<feature type="binding site" evidence="1">
    <location>
        <position position="99"/>
    </location>
    <ligand>
        <name>Mg(2+)</name>
        <dbReference type="ChEBI" id="CHEBI:18420"/>
        <label>1</label>
    </ligand>
</feature>
<feature type="binding site" evidence="1">
    <location>
        <position position="99"/>
    </location>
    <ligand>
        <name>Mg(2+)</name>
        <dbReference type="ChEBI" id="CHEBI:18420"/>
        <label>2</label>
    </ligand>
</feature>
<feature type="binding site" evidence="1">
    <location>
        <position position="104"/>
    </location>
    <ligand>
        <name>dimethylallyl diphosphate</name>
        <dbReference type="ChEBI" id="CHEBI:57623"/>
    </ligand>
</feature>
<feature type="binding site" evidence="1">
    <location>
        <position position="105"/>
    </location>
    <ligand>
        <name>isopentenyl diphosphate</name>
        <dbReference type="ChEBI" id="CHEBI:128769"/>
    </ligand>
</feature>
<feature type="binding site" evidence="1">
    <location>
        <position position="192"/>
    </location>
    <ligand>
        <name>dimethylallyl diphosphate</name>
        <dbReference type="ChEBI" id="CHEBI:57623"/>
    </ligand>
</feature>
<feature type="binding site" evidence="1">
    <location>
        <position position="193"/>
    </location>
    <ligand>
        <name>dimethylallyl diphosphate</name>
        <dbReference type="ChEBI" id="CHEBI:57623"/>
    </ligand>
</feature>
<feature type="binding site" evidence="1">
    <location>
        <position position="232"/>
    </location>
    <ligand>
        <name>dimethylallyl diphosphate</name>
        <dbReference type="ChEBI" id="CHEBI:57623"/>
    </ligand>
</feature>
<feature type="binding site" evidence="1">
    <location>
        <position position="249"/>
    </location>
    <ligand>
        <name>dimethylallyl diphosphate</name>
        <dbReference type="ChEBI" id="CHEBI:57623"/>
    </ligand>
</feature>
<feature type="binding site" evidence="1">
    <location>
        <position position="258"/>
    </location>
    <ligand>
        <name>dimethylallyl diphosphate</name>
        <dbReference type="ChEBI" id="CHEBI:57623"/>
    </ligand>
</feature>
<feature type="mutagenesis site" description="Complements lethality of fps1-delete strain." evidence="3">
    <original>F</original>
    <variation>C</variation>
    <location>
        <position position="90"/>
    </location>
</feature>
<feature type="mutagenesis site" description="No effect on GGPP synthase activity." evidence="3">
    <original>R</original>
    <variation>Q</variation>
    <location>
        <position position="104"/>
    </location>
</feature>
<feature type="sequence conflict" description="In Ref. 2; BAA13767." evidence="5" ref="2">
    <original>A</original>
    <variation>E</variation>
    <location>
        <position position="203"/>
    </location>
</feature>
<feature type="sequence conflict" description="In Ref. 2; BAA13767." evidence="5" ref="2">
    <original>NK</original>
    <variation>ISKFLVLCF</variation>
    <location>
        <begin position="346"/>
        <end position="347"/>
    </location>
</feature>
<evidence type="ECO:0000250" key="1">
    <source>
        <dbReference type="UniProtKB" id="Q12051"/>
    </source>
</evidence>
<evidence type="ECO:0000269" key="2">
    <source>
    </source>
</evidence>
<evidence type="ECO:0000269" key="3">
    <source>
    </source>
</evidence>
<evidence type="ECO:0000303" key="4">
    <source>
    </source>
</evidence>
<evidence type="ECO:0000305" key="5"/>
<evidence type="ECO:0000305" key="6">
    <source>
    </source>
</evidence>
<keyword id="KW-0963">Cytoplasm</keyword>
<keyword id="KW-0414">Isoprene biosynthesis</keyword>
<keyword id="KW-0444">Lipid biosynthesis</keyword>
<keyword id="KW-0443">Lipid metabolism</keyword>
<keyword id="KW-0460">Magnesium</keyword>
<keyword id="KW-0479">Metal-binding</keyword>
<keyword id="KW-0539">Nucleus</keyword>
<keyword id="KW-1185">Reference proteome</keyword>
<keyword id="KW-0808">Transferase</keyword>
<proteinExistence type="evidence at protein level"/>
<accession>O14230</accession>
<accession>P78756</accession>
<reference key="1">
    <citation type="journal article" date="2002" name="Nature">
        <title>The genome sequence of Schizosaccharomyces pombe.</title>
        <authorList>
            <person name="Wood V."/>
            <person name="Gwilliam R."/>
            <person name="Rajandream M.A."/>
            <person name="Lyne M.H."/>
            <person name="Lyne R."/>
            <person name="Stewart A."/>
            <person name="Sgouros J.G."/>
            <person name="Peat N."/>
            <person name="Hayles J."/>
            <person name="Baker S.G."/>
            <person name="Basham D."/>
            <person name="Bowman S."/>
            <person name="Brooks K."/>
            <person name="Brown D."/>
            <person name="Brown S."/>
            <person name="Chillingworth T."/>
            <person name="Churcher C.M."/>
            <person name="Collins M."/>
            <person name="Connor R."/>
            <person name="Cronin A."/>
            <person name="Davis P."/>
            <person name="Feltwell T."/>
            <person name="Fraser A."/>
            <person name="Gentles S."/>
            <person name="Goble A."/>
            <person name="Hamlin N."/>
            <person name="Harris D.E."/>
            <person name="Hidalgo J."/>
            <person name="Hodgson G."/>
            <person name="Holroyd S."/>
            <person name="Hornsby T."/>
            <person name="Howarth S."/>
            <person name="Huckle E.J."/>
            <person name="Hunt S."/>
            <person name="Jagels K."/>
            <person name="James K.D."/>
            <person name="Jones L."/>
            <person name="Jones M."/>
            <person name="Leather S."/>
            <person name="McDonald S."/>
            <person name="McLean J."/>
            <person name="Mooney P."/>
            <person name="Moule S."/>
            <person name="Mungall K.L."/>
            <person name="Murphy L.D."/>
            <person name="Niblett D."/>
            <person name="Odell C."/>
            <person name="Oliver K."/>
            <person name="O'Neil S."/>
            <person name="Pearson D."/>
            <person name="Quail M.A."/>
            <person name="Rabbinowitsch E."/>
            <person name="Rutherford K.M."/>
            <person name="Rutter S."/>
            <person name="Saunders D."/>
            <person name="Seeger K."/>
            <person name="Sharp S."/>
            <person name="Skelton J."/>
            <person name="Simmonds M.N."/>
            <person name="Squares R."/>
            <person name="Squares S."/>
            <person name="Stevens K."/>
            <person name="Taylor K."/>
            <person name="Taylor R.G."/>
            <person name="Tivey A."/>
            <person name="Walsh S.V."/>
            <person name="Warren T."/>
            <person name="Whitehead S."/>
            <person name="Woodward J.R."/>
            <person name="Volckaert G."/>
            <person name="Aert R."/>
            <person name="Robben J."/>
            <person name="Grymonprez B."/>
            <person name="Weltjens I."/>
            <person name="Vanstreels E."/>
            <person name="Rieger M."/>
            <person name="Schaefer M."/>
            <person name="Mueller-Auer S."/>
            <person name="Gabel C."/>
            <person name="Fuchs M."/>
            <person name="Duesterhoeft A."/>
            <person name="Fritzc C."/>
            <person name="Holzer E."/>
            <person name="Moestl D."/>
            <person name="Hilbert H."/>
            <person name="Borzym K."/>
            <person name="Langer I."/>
            <person name="Beck A."/>
            <person name="Lehrach H."/>
            <person name="Reinhardt R."/>
            <person name="Pohl T.M."/>
            <person name="Eger P."/>
            <person name="Zimmermann W."/>
            <person name="Wedler H."/>
            <person name="Wambutt R."/>
            <person name="Purnelle B."/>
            <person name="Goffeau A."/>
            <person name="Cadieu E."/>
            <person name="Dreano S."/>
            <person name="Gloux S."/>
            <person name="Lelaure V."/>
            <person name="Mottier S."/>
            <person name="Galibert F."/>
            <person name="Aves S.J."/>
            <person name="Xiang Z."/>
            <person name="Hunt C."/>
            <person name="Moore K."/>
            <person name="Hurst S.M."/>
            <person name="Lucas M."/>
            <person name="Rochet M."/>
            <person name="Gaillardin C."/>
            <person name="Tallada V.A."/>
            <person name="Garzon A."/>
            <person name="Thode G."/>
            <person name="Daga R.R."/>
            <person name="Cruzado L."/>
            <person name="Jimenez J."/>
            <person name="Sanchez M."/>
            <person name="del Rey F."/>
            <person name="Benito J."/>
            <person name="Dominguez A."/>
            <person name="Revuelta J.L."/>
            <person name="Moreno S."/>
            <person name="Armstrong J."/>
            <person name="Forsburg S.L."/>
            <person name="Cerutti L."/>
            <person name="Lowe T."/>
            <person name="McCombie W.R."/>
            <person name="Paulsen I."/>
            <person name="Potashkin J."/>
            <person name="Shpakovski G.V."/>
            <person name="Ussery D."/>
            <person name="Barrell B.G."/>
            <person name="Nurse P."/>
        </authorList>
    </citation>
    <scope>NUCLEOTIDE SEQUENCE [LARGE SCALE GENOMIC DNA]</scope>
    <source>
        <strain>972 / ATCC 24843</strain>
    </source>
</reference>
<reference key="2">
    <citation type="journal article" date="1997" name="DNA Res.">
        <title>Identification of open reading frames in Schizosaccharomyces pombe cDNAs.</title>
        <authorList>
            <person name="Yoshioka S."/>
            <person name="Kato K."/>
            <person name="Nakai K."/>
            <person name="Okayama H."/>
            <person name="Nojima H."/>
        </authorList>
    </citation>
    <scope>NUCLEOTIDE SEQUENCE [LARGE SCALE MRNA] OF 16-347</scope>
    <source>
        <strain>PR745</strain>
    </source>
</reference>
<reference key="3">
    <citation type="journal article" date="2006" name="Nat. Biotechnol.">
        <title>ORFeome cloning and global analysis of protein localization in the fission yeast Schizosaccharomyces pombe.</title>
        <authorList>
            <person name="Matsuyama A."/>
            <person name="Arai R."/>
            <person name="Yashiroda Y."/>
            <person name="Shirai A."/>
            <person name="Kamata A."/>
            <person name="Sekido S."/>
            <person name="Kobayashi Y."/>
            <person name="Hashimoto A."/>
            <person name="Hamamoto M."/>
            <person name="Hiraoka Y."/>
            <person name="Horinouchi S."/>
            <person name="Yoshida M."/>
        </authorList>
    </citation>
    <scope>SUBCELLULAR LOCATION [LARGE SCALE ANALYSIS]</scope>
</reference>
<reference key="4">
    <citation type="journal article" date="2007" name="Mol. Biol. Cell">
        <title>Geranylgeranyl diphosphate synthase in fission yeast is a heteromer of farnesyl diphosphate synthase (FPS), Fps1, and an FPS-like protein, Spo9, essential for sporulation.</title>
        <authorList>
            <person name="Ye Y."/>
            <person name="Fujii M."/>
            <person name="Hirata A."/>
            <person name="Kawamukai M."/>
            <person name="Shimoda C."/>
            <person name="Nakamura T."/>
        </authorList>
    </citation>
    <scope>FUNCTION</scope>
    <scope>INTERACTION WITH SPO9</scope>
    <scope>MUTAGENESIS OF PHE-90 AND ARG-104</scope>
    <scope>PATHWAY</scope>
</reference>
<name>ERG20_SCHPO</name>
<gene>
    <name evidence="4" type="primary">fps1</name>
    <name type="ORF">SPAC6F12.13c</name>
</gene>
<sequence length="347" mass="39516">MSAVDKRAKFESALPVFVDEIVNYLKTINIPDDVTEWYKNSLFHNTLGGKYNRGLSVIDSYEILLGHPLDEAAYMKAAVLGWMVELLQSFFLIADDIMDASKTRRGQPCWYLMPGVGNIAINDAFMVESAIYFLLKKHFRQESCYVDLIELFHDVTFQTELGQQLDLLTAPEDSVDLSKFSLQKHSFIVIYKTAFYSFYLPVALAMHLAGVATPENLKCAQDILIILGKYFQVQDDYLDCYGDPTVTGKIGTDILDNKCSWIINLALAKCTPEQRVILDDNYGRKDSESEKRVKAVFEELNIRGEFENYEESEVSEIKKLIDGVDESTGLKKSIFTTFLGKIYKRNK</sequence>
<protein>
    <recommendedName>
        <fullName evidence="4">Farnesyl pyrophosphate synthase</fullName>
        <shortName evidence="4">FPP synthase</shortName>
        <shortName evidence="4">FPS</shortName>
        <ecNumber evidence="6">2.5.1.10</ecNumber>
    </recommendedName>
    <alternativeName>
        <fullName evidence="4">(2E,6E)-farnesyl diphosphate synthase</fullName>
    </alternativeName>
    <alternativeName>
        <fullName evidence="4">Dimethylallyltranstransferase</fullName>
        <ecNumber evidence="6">2.5.1.1</ecNumber>
    </alternativeName>
    <alternativeName>
        <fullName evidence="4">Farnesyl diphosphate synthase</fullName>
    </alternativeName>
    <alternativeName>
        <fullName evidence="4">Geranyltranstransferase</fullName>
    </alternativeName>
</protein>
<comment type="function">
    <text evidence="3 5">Farnesyl pyrophosphate synthase; part of the second module of ergosterol biosynthesis pathway that includes the middle steps of the pathway (PubMed:17596513). Fps1 catalyzes the sequential condensation of isopentenyl pyrophosphate with dimethylallyl pyrophosphate, and then with the resultant geranylpyrophosphate to the ultimate product farnesyl pyrophosphate (PubMed:17596513). The second module is carried out in the vacuole and involves the formation of farnesyl diphosphate, which is also an important intermediate in the biosynthesis of ubiquinone, dolichol, heme and prenylated proteins. Activity by the mevalonate kinase erg12 first converts mevalonate into 5-phosphomevalonate. 5-phosphomevalonate is then further converted to 5-diphosphomevalonate by the phosphomevalonate kinase erg8. The diphosphomevalonate decarboxylase mvd1 then produces isopentenyl diphosphate. The isopentenyl-diphosphate delta-isomerase idi1 then catalyzes the 1,3-allylic rearrangement of the homoallylic substrate isopentenyl (IPP) to its highly electrophilic allylic isomer, dimethylallyl diphosphate (DMAPP). Finally the farnesyl diphosphate synthase fps1 catalyzes the sequential condensation of isopentenyl pyrophosphate with dimethylallyl pyrophosphate, and then with the resultant geranylpyrophosphate to the ultimate product farnesyl pyrophosphate (Probable).</text>
</comment>
<comment type="catalytic activity">
    <reaction evidence="6">
        <text>isopentenyl diphosphate + dimethylallyl diphosphate = (2E)-geranyl diphosphate + diphosphate</text>
        <dbReference type="Rhea" id="RHEA:22408"/>
        <dbReference type="ChEBI" id="CHEBI:33019"/>
        <dbReference type="ChEBI" id="CHEBI:57623"/>
        <dbReference type="ChEBI" id="CHEBI:58057"/>
        <dbReference type="ChEBI" id="CHEBI:128769"/>
        <dbReference type="EC" id="2.5.1.1"/>
    </reaction>
    <physiologicalReaction direction="left-to-right" evidence="6">
        <dbReference type="Rhea" id="RHEA:22409"/>
    </physiologicalReaction>
</comment>
<comment type="catalytic activity">
    <reaction evidence="6">
        <text>isopentenyl diphosphate + (2E)-geranyl diphosphate = (2E,6E)-farnesyl diphosphate + diphosphate</text>
        <dbReference type="Rhea" id="RHEA:19361"/>
        <dbReference type="ChEBI" id="CHEBI:33019"/>
        <dbReference type="ChEBI" id="CHEBI:58057"/>
        <dbReference type="ChEBI" id="CHEBI:128769"/>
        <dbReference type="ChEBI" id="CHEBI:175763"/>
        <dbReference type="EC" id="2.5.1.10"/>
    </reaction>
    <physiologicalReaction direction="left-to-right" evidence="6">
        <dbReference type="Rhea" id="RHEA:19362"/>
    </physiologicalReaction>
</comment>
<comment type="cofactor">
    <cofactor evidence="1">
        <name>Mg(2+)</name>
        <dbReference type="ChEBI" id="CHEBI:18420"/>
    </cofactor>
    <text evidence="1">Binds 2 Mg(2+) ions per subunit.</text>
</comment>
<comment type="pathway">
    <text evidence="6">Isoprenoid biosynthesis; farnesyl diphosphate biosynthesis; farnesyl diphosphate from geranyl diphosphate and isopentenyl diphosphate: step 1/1.</text>
</comment>
<comment type="pathway">
    <text evidence="6">Isoprenoid biosynthesis; geranyl diphosphate biosynthesis; geranyl diphosphate from dimethylallyl diphosphate and isopentenyl diphosphate: step 1/1.</text>
</comment>
<comment type="subunit">
    <text evidence="3">Interacts with spo9.</text>
</comment>
<comment type="subcellular location">
    <subcellularLocation>
        <location evidence="2">Cytoplasm</location>
    </subcellularLocation>
    <subcellularLocation>
        <location evidence="2">Nucleus</location>
    </subcellularLocation>
</comment>
<comment type="similarity">
    <text evidence="5">Belongs to the FPP/GGPP synthase family.</text>
</comment>
<organism>
    <name type="scientific">Schizosaccharomyces pombe (strain 972 / ATCC 24843)</name>
    <name type="common">Fission yeast</name>
    <dbReference type="NCBI Taxonomy" id="284812"/>
    <lineage>
        <taxon>Eukaryota</taxon>
        <taxon>Fungi</taxon>
        <taxon>Dikarya</taxon>
        <taxon>Ascomycota</taxon>
        <taxon>Taphrinomycotina</taxon>
        <taxon>Schizosaccharomycetes</taxon>
        <taxon>Schizosaccharomycetales</taxon>
        <taxon>Schizosaccharomycetaceae</taxon>
        <taxon>Schizosaccharomyces</taxon>
    </lineage>
</organism>